<keyword id="KW-0963">Cytoplasm</keyword>
<keyword id="KW-0350">Heme biosynthesis</keyword>
<keyword id="KW-0408">Iron</keyword>
<keyword id="KW-0456">Lyase</keyword>
<keyword id="KW-0479">Metal-binding</keyword>
<keyword id="KW-0627">Porphyrin biosynthesis</keyword>
<evidence type="ECO:0000255" key="1">
    <source>
        <dbReference type="HAMAP-Rule" id="MF_00323"/>
    </source>
</evidence>
<reference key="1">
    <citation type="journal article" date="2007" name="J. Bacteriol.">
        <title>The complete genome sequence of the lactic acid bacterial paradigm Lactococcus lactis subsp. cremoris MG1363.</title>
        <authorList>
            <person name="Wegmann U."/>
            <person name="O'Connell-Motherway M."/>
            <person name="Zomer A."/>
            <person name="Buist G."/>
            <person name="Shearman C."/>
            <person name="Canchaya C."/>
            <person name="Ventura M."/>
            <person name="Goesmann A."/>
            <person name="Gasson M.J."/>
            <person name="Kuipers O.P."/>
            <person name="van Sinderen D."/>
            <person name="Kok J."/>
        </authorList>
    </citation>
    <scope>NUCLEOTIDE SEQUENCE [LARGE SCALE GENOMIC DNA]</scope>
    <source>
        <strain>MG1363</strain>
    </source>
</reference>
<dbReference type="EC" id="4.99.1.9" evidence="1"/>
<dbReference type="EMBL" id="AM406671">
    <property type="protein sequence ID" value="CAL97528.1"/>
    <property type="molecule type" value="Genomic_DNA"/>
</dbReference>
<dbReference type="RefSeq" id="WP_011834879.1">
    <property type="nucleotide sequence ID" value="NC_009004.1"/>
</dbReference>
<dbReference type="SMR" id="A2RJS3"/>
<dbReference type="STRING" id="416870.llmg_0934"/>
<dbReference type="KEGG" id="llm:llmg_0934"/>
<dbReference type="eggNOG" id="COG0276">
    <property type="taxonomic scope" value="Bacteria"/>
</dbReference>
<dbReference type="HOGENOM" id="CLU_018884_0_0_9"/>
<dbReference type="OrthoDB" id="9809741at2"/>
<dbReference type="PhylomeDB" id="A2RJS3"/>
<dbReference type="UniPathway" id="UPA00252"/>
<dbReference type="Proteomes" id="UP000000364">
    <property type="component" value="Chromosome"/>
</dbReference>
<dbReference type="GO" id="GO:0005737">
    <property type="term" value="C:cytoplasm"/>
    <property type="evidence" value="ECO:0007669"/>
    <property type="project" value="UniProtKB-SubCell"/>
</dbReference>
<dbReference type="GO" id="GO:0004325">
    <property type="term" value="F:ferrochelatase activity"/>
    <property type="evidence" value="ECO:0007669"/>
    <property type="project" value="UniProtKB-UniRule"/>
</dbReference>
<dbReference type="GO" id="GO:0046872">
    <property type="term" value="F:metal ion binding"/>
    <property type="evidence" value="ECO:0007669"/>
    <property type="project" value="UniProtKB-KW"/>
</dbReference>
<dbReference type="GO" id="GO:0006783">
    <property type="term" value="P:heme biosynthetic process"/>
    <property type="evidence" value="ECO:0007669"/>
    <property type="project" value="UniProtKB-UniRule"/>
</dbReference>
<dbReference type="CDD" id="cd00419">
    <property type="entry name" value="Ferrochelatase_C"/>
    <property type="match status" value="1"/>
</dbReference>
<dbReference type="CDD" id="cd03411">
    <property type="entry name" value="Ferrochelatase_N"/>
    <property type="match status" value="1"/>
</dbReference>
<dbReference type="FunFam" id="3.40.50.1400:FF:000002">
    <property type="entry name" value="Ferrochelatase"/>
    <property type="match status" value="1"/>
</dbReference>
<dbReference type="Gene3D" id="3.40.50.1400">
    <property type="match status" value="2"/>
</dbReference>
<dbReference type="HAMAP" id="MF_00323">
    <property type="entry name" value="Ferrochelatase"/>
    <property type="match status" value="1"/>
</dbReference>
<dbReference type="InterPro" id="IPR001015">
    <property type="entry name" value="Ferrochelatase"/>
</dbReference>
<dbReference type="InterPro" id="IPR033644">
    <property type="entry name" value="Ferrochelatase_C"/>
</dbReference>
<dbReference type="InterPro" id="IPR033659">
    <property type="entry name" value="Ferrochelatase_N"/>
</dbReference>
<dbReference type="NCBIfam" id="TIGR00109">
    <property type="entry name" value="hemH"/>
    <property type="match status" value="1"/>
</dbReference>
<dbReference type="PANTHER" id="PTHR11108">
    <property type="entry name" value="FERROCHELATASE"/>
    <property type="match status" value="1"/>
</dbReference>
<dbReference type="PANTHER" id="PTHR11108:SF1">
    <property type="entry name" value="FERROCHELATASE, MITOCHONDRIAL"/>
    <property type="match status" value="1"/>
</dbReference>
<dbReference type="Pfam" id="PF00762">
    <property type="entry name" value="Ferrochelatase"/>
    <property type="match status" value="1"/>
</dbReference>
<dbReference type="SUPFAM" id="SSF53800">
    <property type="entry name" value="Chelatase"/>
    <property type="match status" value="1"/>
</dbReference>
<protein>
    <recommendedName>
        <fullName evidence="1">Coproporphyrin III ferrochelatase</fullName>
        <ecNumber evidence="1">4.99.1.9</ecNumber>
    </recommendedName>
</protein>
<organism>
    <name type="scientific">Lactococcus lactis subsp. cremoris (strain MG1363)</name>
    <dbReference type="NCBI Taxonomy" id="416870"/>
    <lineage>
        <taxon>Bacteria</taxon>
        <taxon>Bacillati</taxon>
        <taxon>Bacillota</taxon>
        <taxon>Bacilli</taxon>
        <taxon>Lactobacillales</taxon>
        <taxon>Streptococcaceae</taxon>
        <taxon>Lactococcus</taxon>
        <taxon>Lactococcus cremoris subsp. cremoris</taxon>
    </lineage>
</organism>
<sequence>MDKKKGILLVALGTPRSCETEDVREYLKEFLGDPLVIQKPRWLWLPILNGIILKVRPQKSAEMYKQIWTDEGSPLMSYTIAQTEQLQGLREDFDVRFAMTYGEPRIDKVIREMKESGVEDITVLPLYPQYSLTTVEPIIQQVKKIDDKINVIRDFHQIESYTDLLAESIREKWQANHYDKLILSYHGIPLSYVTKKKDAYEAQCIETTRLFVEKLGLKEEEYEHTYQSKFGPEKWLEPATIDRIAELPKEDTKKVLICSPAFVADCLETLFELEIENKEVFVENGGETFDFVHPFNDSLEFTKVLSEVIEKNKVEVEV</sequence>
<proteinExistence type="inferred from homology"/>
<gene>
    <name evidence="1" type="primary">cpfC</name>
    <name type="ordered locus">llmg_0934</name>
</gene>
<accession>A2RJS3</accession>
<name>CPFC_LACLM</name>
<comment type="function">
    <text evidence="1">Involved in coproporphyrin-dependent heme b biosynthesis. Catalyzes the insertion of ferrous iron into coproporphyrin III to form Fe-coproporphyrin III.</text>
</comment>
<comment type="catalytic activity">
    <reaction evidence="1">
        <text>Fe-coproporphyrin III + 2 H(+) = coproporphyrin III + Fe(2+)</text>
        <dbReference type="Rhea" id="RHEA:49572"/>
        <dbReference type="ChEBI" id="CHEBI:15378"/>
        <dbReference type="ChEBI" id="CHEBI:29033"/>
        <dbReference type="ChEBI" id="CHEBI:68438"/>
        <dbReference type="ChEBI" id="CHEBI:131725"/>
        <dbReference type="EC" id="4.99.1.9"/>
    </reaction>
    <physiologicalReaction direction="right-to-left" evidence="1">
        <dbReference type="Rhea" id="RHEA:49574"/>
    </physiologicalReaction>
</comment>
<comment type="pathway">
    <text evidence="1">Porphyrin-containing compound metabolism; protoheme biosynthesis.</text>
</comment>
<comment type="subcellular location">
    <subcellularLocation>
        <location evidence="1">Cytoplasm</location>
    </subcellularLocation>
</comment>
<comment type="similarity">
    <text evidence="1">Belongs to the ferrochelatase family.</text>
</comment>
<feature type="chain" id="PRO_1000019312" description="Coproporphyrin III ferrochelatase">
    <location>
        <begin position="1"/>
        <end position="318"/>
    </location>
</feature>
<feature type="binding site" evidence="1">
    <location>
        <position position="186"/>
    </location>
    <ligand>
        <name>Fe(2+)</name>
        <dbReference type="ChEBI" id="CHEBI:29033"/>
    </ligand>
</feature>
<feature type="binding site" evidence="1">
    <location>
        <position position="268"/>
    </location>
    <ligand>
        <name>Fe(2+)</name>
        <dbReference type="ChEBI" id="CHEBI:29033"/>
    </ligand>
</feature>